<protein>
    <recommendedName>
        <fullName evidence="1">Ribonuclease H</fullName>
        <shortName evidence="1">RNase H</shortName>
        <ecNumber evidence="1">3.1.26.4</ecNumber>
    </recommendedName>
</protein>
<organism>
    <name type="scientific">Thermosynechococcus vestitus (strain NIES-2133 / IAM M-273 / BP-1)</name>
    <dbReference type="NCBI Taxonomy" id="197221"/>
    <lineage>
        <taxon>Bacteria</taxon>
        <taxon>Bacillati</taxon>
        <taxon>Cyanobacteriota</taxon>
        <taxon>Cyanophyceae</taxon>
        <taxon>Acaryochloridales</taxon>
        <taxon>Thermosynechococcaceae</taxon>
        <taxon>Thermosynechococcus</taxon>
    </lineage>
</organism>
<reference key="1">
    <citation type="journal article" date="2002" name="DNA Res.">
        <title>Complete genome structure of the thermophilic cyanobacterium Thermosynechococcus elongatus BP-1.</title>
        <authorList>
            <person name="Nakamura Y."/>
            <person name="Kaneko T."/>
            <person name="Sato S."/>
            <person name="Ikeuchi M."/>
            <person name="Katoh H."/>
            <person name="Sasamoto S."/>
            <person name="Watanabe A."/>
            <person name="Iriguchi M."/>
            <person name="Kawashima K."/>
            <person name="Kimura T."/>
            <person name="Kishida Y."/>
            <person name="Kiyokawa C."/>
            <person name="Kohara M."/>
            <person name="Matsumoto M."/>
            <person name="Matsuno A."/>
            <person name="Nakazaki N."/>
            <person name="Shimpo S."/>
            <person name="Sugimoto M."/>
            <person name="Takeuchi C."/>
            <person name="Yamada M."/>
            <person name="Tabata S."/>
        </authorList>
    </citation>
    <scope>NUCLEOTIDE SEQUENCE [LARGE SCALE GENOMIC DNA]</scope>
    <source>
        <strain>NIES-2133 / IAM M-273 / BP-1</strain>
    </source>
</reference>
<accession>Q8DM24</accession>
<proteinExistence type="inferred from homology"/>
<evidence type="ECO:0000255" key="1">
    <source>
        <dbReference type="HAMAP-Rule" id="MF_00042"/>
    </source>
</evidence>
<evidence type="ECO:0000255" key="2">
    <source>
        <dbReference type="PROSITE-ProRule" id="PRU00408"/>
    </source>
</evidence>
<keyword id="KW-0963">Cytoplasm</keyword>
<keyword id="KW-0255">Endonuclease</keyword>
<keyword id="KW-0378">Hydrolase</keyword>
<keyword id="KW-0460">Magnesium</keyword>
<keyword id="KW-0479">Metal-binding</keyword>
<keyword id="KW-0540">Nuclease</keyword>
<keyword id="KW-1185">Reference proteome</keyword>
<feature type="chain" id="PRO_0000195407" description="Ribonuclease H">
    <location>
        <begin position="1"/>
        <end position="159"/>
    </location>
</feature>
<feature type="domain" description="RNase H type-1" evidence="2">
    <location>
        <begin position="1"/>
        <end position="145"/>
    </location>
</feature>
<feature type="binding site" evidence="1">
    <location>
        <position position="10"/>
    </location>
    <ligand>
        <name>Mg(2+)</name>
        <dbReference type="ChEBI" id="CHEBI:18420"/>
        <label>1</label>
    </ligand>
</feature>
<feature type="binding site" evidence="1">
    <location>
        <position position="10"/>
    </location>
    <ligand>
        <name>Mg(2+)</name>
        <dbReference type="ChEBI" id="CHEBI:18420"/>
        <label>2</label>
    </ligand>
</feature>
<feature type="binding site" evidence="1">
    <location>
        <position position="49"/>
    </location>
    <ligand>
        <name>Mg(2+)</name>
        <dbReference type="ChEBI" id="CHEBI:18420"/>
        <label>1</label>
    </ligand>
</feature>
<feature type="binding site" evidence="1">
    <location>
        <position position="74"/>
    </location>
    <ligand>
        <name>Mg(2+)</name>
        <dbReference type="ChEBI" id="CHEBI:18420"/>
        <label>1</label>
    </ligand>
</feature>
<feature type="binding site" evidence="1">
    <location>
        <position position="137"/>
    </location>
    <ligand>
        <name>Mg(2+)</name>
        <dbReference type="ChEBI" id="CHEBI:18420"/>
        <label>2</label>
    </ligand>
</feature>
<dbReference type="EC" id="3.1.26.4" evidence="1"/>
<dbReference type="EMBL" id="BA000039">
    <property type="protein sequence ID" value="BAC07852.1"/>
    <property type="molecule type" value="Genomic_DNA"/>
</dbReference>
<dbReference type="RefSeq" id="NP_681090.1">
    <property type="nucleotide sequence ID" value="NC_004113.1"/>
</dbReference>
<dbReference type="RefSeq" id="WP_011056154.1">
    <property type="nucleotide sequence ID" value="NC_004113.1"/>
</dbReference>
<dbReference type="SMR" id="Q8DM24"/>
<dbReference type="STRING" id="197221.gene:10746882"/>
<dbReference type="EnsemblBacteria" id="BAC07852">
    <property type="protein sequence ID" value="BAC07852"/>
    <property type="gene ID" value="BAC07852"/>
</dbReference>
<dbReference type="KEGG" id="tel:tlr0299"/>
<dbReference type="PATRIC" id="fig|197221.4.peg.313"/>
<dbReference type="eggNOG" id="COG0328">
    <property type="taxonomic scope" value="Bacteria"/>
</dbReference>
<dbReference type="Proteomes" id="UP000000440">
    <property type="component" value="Chromosome"/>
</dbReference>
<dbReference type="GO" id="GO:0005737">
    <property type="term" value="C:cytoplasm"/>
    <property type="evidence" value="ECO:0007669"/>
    <property type="project" value="UniProtKB-SubCell"/>
</dbReference>
<dbReference type="GO" id="GO:0000287">
    <property type="term" value="F:magnesium ion binding"/>
    <property type="evidence" value="ECO:0007669"/>
    <property type="project" value="UniProtKB-UniRule"/>
</dbReference>
<dbReference type="GO" id="GO:0003676">
    <property type="term" value="F:nucleic acid binding"/>
    <property type="evidence" value="ECO:0007669"/>
    <property type="project" value="InterPro"/>
</dbReference>
<dbReference type="GO" id="GO:0004523">
    <property type="term" value="F:RNA-DNA hybrid ribonuclease activity"/>
    <property type="evidence" value="ECO:0007669"/>
    <property type="project" value="UniProtKB-UniRule"/>
</dbReference>
<dbReference type="GO" id="GO:0043137">
    <property type="term" value="P:DNA replication, removal of RNA primer"/>
    <property type="evidence" value="ECO:0007669"/>
    <property type="project" value="TreeGrafter"/>
</dbReference>
<dbReference type="CDD" id="cd09278">
    <property type="entry name" value="RNase_HI_prokaryote_like"/>
    <property type="match status" value="1"/>
</dbReference>
<dbReference type="Gene3D" id="3.30.420.10">
    <property type="entry name" value="Ribonuclease H-like superfamily/Ribonuclease H"/>
    <property type="match status" value="1"/>
</dbReference>
<dbReference type="HAMAP" id="MF_00042">
    <property type="entry name" value="RNase_H"/>
    <property type="match status" value="1"/>
</dbReference>
<dbReference type="InterPro" id="IPR050092">
    <property type="entry name" value="RNase_H"/>
</dbReference>
<dbReference type="InterPro" id="IPR012337">
    <property type="entry name" value="RNaseH-like_sf"/>
</dbReference>
<dbReference type="InterPro" id="IPR002156">
    <property type="entry name" value="RNaseH_domain"/>
</dbReference>
<dbReference type="InterPro" id="IPR036397">
    <property type="entry name" value="RNaseH_sf"/>
</dbReference>
<dbReference type="InterPro" id="IPR022892">
    <property type="entry name" value="RNaseHI"/>
</dbReference>
<dbReference type="NCBIfam" id="NF001236">
    <property type="entry name" value="PRK00203.1"/>
    <property type="match status" value="1"/>
</dbReference>
<dbReference type="PANTHER" id="PTHR10642">
    <property type="entry name" value="RIBONUCLEASE H1"/>
    <property type="match status" value="1"/>
</dbReference>
<dbReference type="PANTHER" id="PTHR10642:SF26">
    <property type="entry name" value="RIBONUCLEASE H1"/>
    <property type="match status" value="1"/>
</dbReference>
<dbReference type="Pfam" id="PF00075">
    <property type="entry name" value="RNase_H"/>
    <property type="match status" value="1"/>
</dbReference>
<dbReference type="SUPFAM" id="SSF53098">
    <property type="entry name" value="Ribonuclease H-like"/>
    <property type="match status" value="1"/>
</dbReference>
<dbReference type="PROSITE" id="PS50879">
    <property type="entry name" value="RNASE_H_1"/>
    <property type="match status" value="1"/>
</dbReference>
<comment type="function">
    <text evidence="1">Endonuclease that specifically degrades the RNA of RNA-DNA hybrids.</text>
</comment>
<comment type="catalytic activity">
    <reaction evidence="1">
        <text>Endonucleolytic cleavage to 5'-phosphomonoester.</text>
        <dbReference type="EC" id="3.1.26.4"/>
    </reaction>
</comment>
<comment type="cofactor">
    <cofactor evidence="1">
        <name>Mg(2+)</name>
        <dbReference type="ChEBI" id="CHEBI:18420"/>
    </cofactor>
    <text evidence="1">Binds 1 Mg(2+) ion per subunit. May bind a second metal ion at a regulatory site, or after substrate binding.</text>
</comment>
<comment type="subunit">
    <text evidence="1">Monomer.</text>
</comment>
<comment type="subcellular location">
    <subcellularLocation>
        <location evidence="1">Cytoplasm</location>
    </subcellularLocation>
</comment>
<comment type="similarity">
    <text evidence="1">Belongs to the RNase H family.</text>
</comment>
<sequence>MTHIRAIYTDGACEGNPGPGGWGVVIYFTDGSVHELGGHHPATTNNRMELQAAIEALKAWRQLAPGSAIALYTDSEYVLRGITEWIHHWKRRGWKTAAKKPVLNQDLWQELDALNDPLVQWHHVRGHRGDVGNERCDLIARRLSRGQPIALRTLPPPLG</sequence>
<gene>
    <name evidence="1" type="primary">rnhA</name>
    <name type="ordered locus">tlr0299</name>
</gene>
<name>RNH_THEVB</name>